<evidence type="ECO:0000255" key="1">
    <source>
        <dbReference type="HAMAP-Rule" id="MF_00821"/>
    </source>
</evidence>
<comment type="function">
    <text evidence="1">One of the proteins required for the normal export of preproteins out of the cell cytoplasm. It is a molecular chaperone that binds to a subset of precursor proteins, maintaining them in a translocation-competent state. It also specifically binds to its receptor SecA.</text>
</comment>
<comment type="subunit">
    <text evidence="1">Homotetramer, a dimer of dimers. One homotetramer interacts with 1 SecA dimer.</text>
</comment>
<comment type="subcellular location">
    <subcellularLocation>
        <location evidence="1">Cytoplasm</location>
    </subcellularLocation>
</comment>
<comment type="similarity">
    <text evidence="1">Belongs to the SecB family.</text>
</comment>
<organism>
    <name type="scientific">Janthinobacterium sp. (strain Marseille)</name>
    <name type="common">Minibacterium massiliensis</name>
    <dbReference type="NCBI Taxonomy" id="375286"/>
    <lineage>
        <taxon>Bacteria</taxon>
        <taxon>Pseudomonadati</taxon>
        <taxon>Pseudomonadota</taxon>
        <taxon>Betaproteobacteria</taxon>
        <taxon>Burkholderiales</taxon>
        <taxon>Oxalobacteraceae</taxon>
        <taxon>Janthinobacterium</taxon>
    </lineage>
</organism>
<name>SECB_JANMA</name>
<sequence>MADENLQPLFQIQRVYLKDLSLEQPNSPAIFLEQEQPTIEVAVDVGAQPLAEGIFESTVTITVTAKIADKIAFLVEGKQAGIFEIRNIPDEQLDPLLGIGCPNVIYPYLRANIADAITRAGFPPVHLSEINFEVFYQQRLEALAQQQADNSSGIVMADGSAARH</sequence>
<protein>
    <recommendedName>
        <fullName evidence="1">Protein-export protein SecB</fullName>
    </recommendedName>
</protein>
<keyword id="KW-0143">Chaperone</keyword>
<keyword id="KW-0963">Cytoplasm</keyword>
<keyword id="KW-0653">Protein transport</keyword>
<keyword id="KW-0811">Translocation</keyword>
<keyword id="KW-0813">Transport</keyword>
<reference key="1">
    <citation type="journal article" date="2007" name="PLoS Genet.">
        <title>Genome analysis of Minibacterium massiliensis highlights the convergent evolution of water-living bacteria.</title>
        <authorList>
            <person name="Audic S."/>
            <person name="Robert C."/>
            <person name="Campagna B."/>
            <person name="Parinello H."/>
            <person name="Claverie J.-M."/>
            <person name="Raoult D."/>
            <person name="Drancourt M."/>
        </authorList>
    </citation>
    <scope>NUCLEOTIDE SEQUENCE [LARGE SCALE GENOMIC DNA]</scope>
    <source>
        <strain>Marseille</strain>
    </source>
</reference>
<accession>A6T312</accession>
<dbReference type="EMBL" id="CP000269">
    <property type="protein sequence ID" value="ABR88669.1"/>
    <property type="molecule type" value="Genomic_DNA"/>
</dbReference>
<dbReference type="RefSeq" id="WP_012081062.1">
    <property type="nucleotide sequence ID" value="NC_009659.1"/>
</dbReference>
<dbReference type="SMR" id="A6T312"/>
<dbReference type="STRING" id="375286.mma_3219"/>
<dbReference type="KEGG" id="mms:mma_3219"/>
<dbReference type="eggNOG" id="COG1952">
    <property type="taxonomic scope" value="Bacteria"/>
</dbReference>
<dbReference type="HOGENOM" id="CLU_111574_1_0_4"/>
<dbReference type="OrthoDB" id="9795145at2"/>
<dbReference type="Proteomes" id="UP000006388">
    <property type="component" value="Chromosome"/>
</dbReference>
<dbReference type="GO" id="GO:0005737">
    <property type="term" value="C:cytoplasm"/>
    <property type="evidence" value="ECO:0007669"/>
    <property type="project" value="UniProtKB-SubCell"/>
</dbReference>
<dbReference type="GO" id="GO:0051082">
    <property type="term" value="F:unfolded protein binding"/>
    <property type="evidence" value="ECO:0007669"/>
    <property type="project" value="InterPro"/>
</dbReference>
<dbReference type="GO" id="GO:0006457">
    <property type="term" value="P:protein folding"/>
    <property type="evidence" value="ECO:0007669"/>
    <property type="project" value="UniProtKB-UniRule"/>
</dbReference>
<dbReference type="GO" id="GO:0051262">
    <property type="term" value="P:protein tetramerization"/>
    <property type="evidence" value="ECO:0007669"/>
    <property type="project" value="InterPro"/>
</dbReference>
<dbReference type="GO" id="GO:0015031">
    <property type="term" value="P:protein transport"/>
    <property type="evidence" value="ECO:0007669"/>
    <property type="project" value="UniProtKB-UniRule"/>
</dbReference>
<dbReference type="Gene3D" id="3.10.420.10">
    <property type="entry name" value="SecB-like"/>
    <property type="match status" value="1"/>
</dbReference>
<dbReference type="HAMAP" id="MF_00821">
    <property type="entry name" value="SecB"/>
    <property type="match status" value="1"/>
</dbReference>
<dbReference type="InterPro" id="IPR003708">
    <property type="entry name" value="SecB"/>
</dbReference>
<dbReference type="InterPro" id="IPR035958">
    <property type="entry name" value="SecB-like_sf"/>
</dbReference>
<dbReference type="NCBIfam" id="NF004394">
    <property type="entry name" value="PRK05751.1-5"/>
    <property type="match status" value="1"/>
</dbReference>
<dbReference type="NCBIfam" id="TIGR00809">
    <property type="entry name" value="secB"/>
    <property type="match status" value="1"/>
</dbReference>
<dbReference type="PANTHER" id="PTHR36918">
    <property type="match status" value="1"/>
</dbReference>
<dbReference type="PANTHER" id="PTHR36918:SF1">
    <property type="entry name" value="PROTEIN-EXPORT PROTEIN SECB"/>
    <property type="match status" value="1"/>
</dbReference>
<dbReference type="Pfam" id="PF02556">
    <property type="entry name" value="SecB"/>
    <property type="match status" value="1"/>
</dbReference>
<dbReference type="PRINTS" id="PR01594">
    <property type="entry name" value="SECBCHAPRONE"/>
</dbReference>
<dbReference type="SUPFAM" id="SSF54611">
    <property type="entry name" value="SecB-like"/>
    <property type="match status" value="1"/>
</dbReference>
<feature type="chain" id="PRO_1000062481" description="Protein-export protein SecB">
    <location>
        <begin position="1"/>
        <end position="164"/>
    </location>
</feature>
<gene>
    <name evidence="1" type="primary">secB</name>
    <name type="ordered locus">mma_3219</name>
</gene>
<proteinExistence type="inferred from homology"/>